<keyword id="KW-0456">Lyase</keyword>
<keyword id="KW-0479">Metal-binding</keyword>
<name>TPS3_DICDI</name>
<sequence length="362" mass="42709">METINLEKPLYSLKKFYFPSEWSYPINKNYKHIKDTYNEGVSCGIFEASNEKHFAYANGVLNCVTWFYPKYDYEQCMVAASIMLWIFVLDDFLERDHMTDEKQQYCVKKYEDILIFGKDSSYISNIEYNDLTPLDKYSLILRKRLLNPTIHRIESFNIFIHYLREWFFSIIPLKKSKGNNHDSVPIEVYQFIRTINIGLFFVVGVNSVAVRTNVHGSFWLNPIWNRMVRSASRQIIIFNDCVSYAKELNHDCAGENCLYILQKKLNLPFEKVYSELIAEAKQCIFDIQNDEKLLIKSLSHISEEEMNGVIYLVEQLHEIICGNRDWALMTPRYIHKDSPFIETNGIDSLFVPYETILDPNLY</sequence>
<comment type="function">
    <text evidence="2">Terpene synthase that converts its substrate farnesyl diphosphate (FPP) into an unidentified sesquiterpene as a major product, as well as beta-maaliene, aristolene, calarene and 2 additional unidentified sesquiterpene as minor products (PubMed:27790999). Is also able to convert geranyl diphosphate (GPP) into a mixture of monoterpenes including (Z)-beta-ocimene, (E)-beta-ocimene, allo-ocimene, linalool and beta-myrcene (PubMed:27790999).</text>
</comment>
<comment type="catalytic activity">
    <reaction evidence="2">
        <text>(2E,6E)-farnesyl diphosphate = beta-maaliene + diphosphate</text>
        <dbReference type="Rhea" id="RHEA:73951"/>
        <dbReference type="ChEBI" id="CHEBI:33019"/>
        <dbReference type="ChEBI" id="CHEBI:132831"/>
        <dbReference type="ChEBI" id="CHEBI:175763"/>
    </reaction>
    <physiologicalReaction direction="left-to-right" evidence="2">
        <dbReference type="Rhea" id="RHEA:73952"/>
    </physiologicalReaction>
</comment>
<comment type="catalytic activity">
    <reaction evidence="2">
        <text>(2E,6E)-farnesyl diphosphate = aristolene + diphosphate</text>
        <dbReference type="Rhea" id="RHEA:73963"/>
        <dbReference type="ChEBI" id="CHEBI:33019"/>
        <dbReference type="ChEBI" id="CHEBI:167397"/>
        <dbReference type="ChEBI" id="CHEBI:175763"/>
    </reaction>
    <physiologicalReaction direction="left-to-right" evidence="2">
        <dbReference type="Rhea" id="RHEA:73964"/>
    </physiologicalReaction>
</comment>
<comment type="catalytic activity">
    <reaction evidence="2">
        <text>(2E,6E)-farnesyl diphosphate = calarene + diphosphate</text>
        <dbReference type="Rhea" id="RHEA:73979"/>
        <dbReference type="ChEBI" id="CHEBI:33019"/>
        <dbReference type="ChEBI" id="CHEBI:167398"/>
        <dbReference type="ChEBI" id="CHEBI:175763"/>
    </reaction>
    <physiologicalReaction direction="left-to-right" evidence="2">
        <dbReference type="Rhea" id="RHEA:73980"/>
    </physiologicalReaction>
</comment>
<comment type="catalytic activity">
    <reaction evidence="2">
        <text>(2E)-geranyl diphosphate = (E)-beta-ocimene + diphosphate</text>
        <dbReference type="Rhea" id="RHEA:32691"/>
        <dbReference type="ChEBI" id="CHEBI:33019"/>
        <dbReference type="ChEBI" id="CHEBI:58057"/>
        <dbReference type="ChEBI" id="CHEBI:64280"/>
        <dbReference type="EC" id="4.2.3.106"/>
    </reaction>
    <physiologicalReaction direction="left-to-right" evidence="2">
        <dbReference type="Rhea" id="RHEA:32692"/>
    </physiologicalReaction>
</comment>
<comment type="catalytic activity">
    <reaction evidence="2">
        <text>(2E)-geranyl diphosphate = (Z)-beta-ocimene + diphosphate</text>
        <dbReference type="Rhea" id="RHEA:68824"/>
        <dbReference type="ChEBI" id="CHEBI:33019"/>
        <dbReference type="ChEBI" id="CHEBI:58057"/>
        <dbReference type="ChEBI" id="CHEBI:87574"/>
    </reaction>
    <physiologicalReaction direction="left-to-right" evidence="2">
        <dbReference type="Rhea" id="RHEA:68825"/>
    </physiologicalReaction>
</comment>
<comment type="catalytic activity">
    <reaction evidence="2">
        <text>(2E)-geranyl diphosphate + H2O = linalool + diphosphate</text>
        <dbReference type="Rhea" id="RHEA:68708"/>
        <dbReference type="ChEBI" id="CHEBI:15377"/>
        <dbReference type="ChEBI" id="CHEBI:17580"/>
        <dbReference type="ChEBI" id="CHEBI:33019"/>
        <dbReference type="ChEBI" id="CHEBI:58057"/>
    </reaction>
    <physiologicalReaction direction="left-to-right" evidence="2">
        <dbReference type="Rhea" id="RHEA:68709"/>
    </physiologicalReaction>
</comment>
<comment type="catalytic activity">
    <reaction evidence="2">
        <text>(2E)-geranyl diphosphate = beta-myrcene + diphosphate</text>
        <dbReference type="Rhea" id="RHEA:16965"/>
        <dbReference type="ChEBI" id="CHEBI:17221"/>
        <dbReference type="ChEBI" id="CHEBI:33019"/>
        <dbReference type="ChEBI" id="CHEBI:58057"/>
        <dbReference type="EC" id="4.2.3.15"/>
    </reaction>
    <physiologicalReaction direction="left-to-right" evidence="2">
        <dbReference type="Rhea" id="RHEA:16966"/>
    </physiologicalReaction>
</comment>
<comment type="induction">
    <text evidence="2">Expression is detectable but at low levels in vegetatively growing cells and increases during development induced by starvation (PubMed:27790999). Expression is highest during mound formation (approximately 8-12 hours after induction), starts to decrease at the time of slug formation (approximately 16 hours after induction) and further decreases during culmination (from 18 to 24 hours after induction) (PubMed:27790999).</text>
</comment>
<comment type="domain">
    <text evidence="5">Contains several highly conserved motifs that are important for catalytic activity including the aspartate-rich 'DDxx(x)D/E' motif and the 'NDxxSxxxD/E' motif, both of which are involved in complexing metal ions to coordinate the binding of the isoprenyl diphosphate substrate in the active site.</text>
</comment>
<comment type="similarity">
    <text evidence="4">Belongs to the terpene synthase family.</text>
</comment>
<gene>
    <name evidence="3" type="primary">TPS3</name>
    <name type="ORF">DDB0168894</name>
</gene>
<reference key="1">
    <citation type="journal article" date="2016" name="Proc. Natl. Acad. Sci. U.S.A.">
        <title>Terpene synthase genes in eukaryotes beyond plants and fungi: Occurrence in social amoebae.</title>
        <authorList>
            <person name="Chen X."/>
            <person name="Koellner T.G."/>
            <person name="Jia Q."/>
            <person name="Norris A."/>
            <person name="Santhanam B."/>
            <person name="Rabe P."/>
            <person name="Dickschat J.S."/>
            <person name="Shaulsky G."/>
            <person name="Gershenzon J."/>
            <person name="Chen F."/>
        </authorList>
    </citation>
    <scope>NUCLEOTIDE SEQUENCE [MRNA]</scope>
    <scope>INDUCTION</scope>
    <scope>FUNCTION</scope>
    <scope>CATALYTIC ACTIVITY</scope>
    <scope>DOMAIN</scope>
    <source>
        <strain>AX4</strain>
    </source>
</reference>
<reference key="2">
    <citation type="journal article" date="2002" name="Nature">
        <title>Sequence and analysis of chromosome 2 of Dictyostelium discoideum.</title>
        <authorList>
            <person name="Gloeckner G."/>
            <person name="Eichinger L."/>
            <person name="Szafranski K."/>
            <person name="Pachebat J.A."/>
            <person name="Bankier A.T."/>
            <person name="Dear P.H."/>
            <person name="Lehmann R."/>
            <person name="Baumgart C."/>
            <person name="Parra G."/>
            <person name="Abril J.F."/>
            <person name="Guigo R."/>
            <person name="Kumpf K."/>
            <person name="Tunggal B."/>
            <person name="Cox E.C."/>
            <person name="Quail M.A."/>
            <person name="Platzer M."/>
            <person name="Rosenthal A."/>
            <person name="Noegel A.A."/>
        </authorList>
    </citation>
    <scope>NUCLEOTIDE SEQUENCE [LARGE SCALE GENOMIC DNA]</scope>
    <source>
        <strain>AX4</strain>
    </source>
</reference>
<reference key="3">
    <citation type="journal article" date="2005" name="Nature">
        <title>The genome of the social amoeba Dictyostelium discoideum.</title>
        <authorList>
            <person name="Eichinger L."/>
            <person name="Pachebat J.A."/>
            <person name="Gloeckner G."/>
            <person name="Rajandream M.A."/>
            <person name="Sucgang R."/>
            <person name="Berriman M."/>
            <person name="Song J."/>
            <person name="Olsen R."/>
            <person name="Szafranski K."/>
            <person name="Xu Q."/>
            <person name="Tunggal B."/>
            <person name="Kummerfeld S."/>
            <person name="Madera M."/>
            <person name="Konfortov B.A."/>
            <person name="Rivero F."/>
            <person name="Bankier A.T."/>
            <person name="Lehmann R."/>
            <person name="Hamlin N."/>
            <person name="Davies R."/>
            <person name="Gaudet P."/>
            <person name="Fey P."/>
            <person name="Pilcher K."/>
            <person name="Chen G."/>
            <person name="Saunders D."/>
            <person name="Sodergren E.J."/>
            <person name="Davis P."/>
            <person name="Kerhornou A."/>
            <person name="Nie X."/>
            <person name="Hall N."/>
            <person name="Anjard C."/>
            <person name="Hemphill L."/>
            <person name="Bason N."/>
            <person name="Farbrother P."/>
            <person name="Desany B."/>
            <person name="Just E."/>
            <person name="Morio T."/>
            <person name="Rost R."/>
            <person name="Churcher C.M."/>
            <person name="Cooper J."/>
            <person name="Haydock S."/>
            <person name="van Driessche N."/>
            <person name="Cronin A."/>
            <person name="Goodhead I."/>
            <person name="Muzny D.M."/>
            <person name="Mourier T."/>
            <person name="Pain A."/>
            <person name="Lu M."/>
            <person name="Harper D."/>
            <person name="Lindsay R."/>
            <person name="Hauser H."/>
            <person name="James K.D."/>
            <person name="Quiles M."/>
            <person name="Madan Babu M."/>
            <person name="Saito T."/>
            <person name="Buchrieser C."/>
            <person name="Wardroper A."/>
            <person name="Felder M."/>
            <person name="Thangavelu M."/>
            <person name="Johnson D."/>
            <person name="Knights A."/>
            <person name="Loulseged H."/>
            <person name="Mungall K.L."/>
            <person name="Oliver K."/>
            <person name="Price C."/>
            <person name="Quail M.A."/>
            <person name="Urushihara H."/>
            <person name="Hernandez J."/>
            <person name="Rabbinowitsch E."/>
            <person name="Steffen D."/>
            <person name="Sanders M."/>
            <person name="Ma J."/>
            <person name="Kohara Y."/>
            <person name="Sharp S."/>
            <person name="Simmonds M.N."/>
            <person name="Spiegler S."/>
            <person name="Tivey A."/>
            <person name="Sugano S."/>
            <person name="White B."/>
            <person name="Walker D."/>
            <person name="Woodward J.R."/>
            <person name="Winckler T."/>
            <person name="Tanaka Y."/>
            <person name="Shaulsky G."/>
            <person name="Schleicher M."/>
            <person name="Weinstock G.M."/>
            <person name="Rosenthal A."/>
            <person name="Cox E.C."/>
            <person name="Chisholm R.L."/>
            <person name="Gibbs R.A."/>
            <person name="Loomis W.F."/>
            <person name="Platzer M."/>
            <person name="Kay R.R."/>
            <person name="Williams J.G."/>
            <person name="Dear P.H."/>
            <person name="Noegel A.A."/>
            <person name="Barrell B.G."/>
            <person name="Kuspa A."/>
        </authorList>
    </citation>
    <scope>NUCLEOTIDE SEQUENCE [LARGE SCALE GENOMIC DNA]</scope>
    <source>
        <strain>AX4</strain>
    </source>
</reference>
<evidence type="ECO:0000250" key="1">
    <source>
        <dbReference type="UniProtKB" id="Q54BE5"/>
    </source>
</evidence>
<evidence type="ECO:0000269" key="2">
    <source>
    </source>
</evidence>
<evidence type="ECO:0000303" key="3">
    <source>
    </source>
</evidence>
<evidence type="ECO:0000305" key="4"/>
<evidence type="ECO:0000305" key="5">
    <source>
    </source>
</evidence>
<protein>
    <recommendedName>
        <fullName evidence="3">Terpene synthase 3</fullName>
        <ecNumber evidence="2">4.2.3.-</ecNumber>
        <ecNumber evidence="2">4.2.3.106</ecNumber>
        <ecNumber evidence="2">4.2.3.15</ecNumber>
    </recommendedName>
</protein>
<organism>
    <name type="scientific">Dictyostelium discoideum</name>
    <name type="common">Social amoeba</name>
    <dbReference type="NCBI Taxonomy" id="44689"/>
    <lineage>
        <taxon>Eukaryota</taxon>
        <taxon>Amoebozoa</taxon>
        <taxon>Evosea</taxon>
        <taxon>Eumycetozoa</taxon>
        <taxon>Dictyostelia</taxon>
        <taxon>Dictyosteliales</taxon>
        <taxon>Dictyosteliaceae</taxon>
        <taxon>Dictyostelium</taxon>
    </lineage>
</organism>
<feature type="chain" id="PRO_0000456819" description="Terpene synthase 3">
    <location>
        <begin position="1"/>
        <end position="362"/>
    </location>
</feature>
<feature type="short sequence motif" description="DDxx(x)D/E motif" evidence="1">
    <location>
        <begin position="90"/>
        <end position="95"/>
    </location>
</feature>
<feature type="short sequence motif" description="NDxxSxxxD/E motif" evidence="1">
    <location>
        <begin position="239"/>
        <end position="247"/>
    </location>
</feature>
<accession>Q86II4</accession>
<accession>Q559E2</accession>
<proteinExistence type="evidence at protein level"/>
<dbReference type="EC" id="4.2.3.-" evidence="2"/>
<dbReference type="EC" id="4.2.3.106" evidence="2"/>
<dbReference type="EC" id="4.2.3.15" evidence="2"/>
<dbReference type="EMBL" id="KX364376">
    <property type="protein sequence ID" value="APC23387.1"/>
    <property type="molecule type" value="mRNA"/>
</dbReference>
<dbReference type="EMBL" id="AAFI01000022">
    <property type="protein sequence ID" value="EAL70990.1"/>
    <property type="molecule type" value="Genomic_DNA"/>
</dbReference>
<dbReference type="RefSeq" id="XP_644874.1">
    <property type="nucleotide sequence ID" value="XM_639782.1"/>
</dbReference>
<dbReference type="SMR" id="Q86II4"/>
<dbReference type="STRING" id="44689.Q86II4"/>
<dbReference type="PaxDb" id="44689-DDB0168894"/>
<dbReference type="KEGG" id="ddi:DDB_G0272706"/>
<dbReference type="dictyBase" id="DDB_G0272706">
    <property type="gene designation" value="tps3"/>
</dbReference>
<dbReference type="VEuPathDB" id="AmoebaDB:DDB_G0272706"/>
<dbReference type="eggNOG" id="ENOG502RER5">
    <property type="taxonomic scope" value="Eukaryota"/>
</dbReference>
<dbReference type="HOGENOM" id="CLU_070708_0_0_1"/>
<dbReference type="InParanoid" id="Q86II4"/>
<dbReference type="OMA" id="HFAYANG"/>
<dbReference type="PRO" id="PR:Q86II4"/>
<dbReference type="GO" id="GO:0046872">
    <property type="term" value="F:metal ion binding"/>
    <property type="evidence" value="ECO:0007669"/>
    <property type="project" value="UniProtKB-KW"/>
</dbReference>
<dbReference type="GO" id="GO:0010334">
    <property type="term" value="F:sesquiterpene synthase activity"/>
    <property type="evidence" value="ECO:0000314"/>
    <property type="project" value="dictyBase"/>
</dbReference>
<dbReference type="GO" id="GO:0010333">
    <property type="term" value="F:terpene synthase activity"/>
    <property type="evidence" value="ECO:0000318"/>
    <property type="project" value="GO_Central"/>
</dbReference>
<dbReference type="GO" id="GO:0051762">
    <property type="term" value="P:sesquiterpene biosynthetic process"/>
    <property type="evidence" value="ECO:0000304"/>
    <property type="project" value="dictyBase"/>
</dbReference>
<dbReference type="GO" id="GO:0031150">
    <property type="term" value="P:sorocarp stalk development"/>
    <property type="evidence" value="ECO:0000314"/>
    <property type="project" value="dictyBase"/>
</dbReference>
<dbReference type="CDD" id="cd00687">
    <property type="entry name" value="Terpene_cyclase_nonplant_C1"/>
    <property type="match status" value="1"/>
</dbReference>
<dbReference type="FunFam" id="1.10.600.10:FF:000064">
    <property type="entry name" value="Terpene synthase"/>
    <property type="match status" value="1"/>
</dbReference>
<dbReference type="Gene3D" id="1.10.600.10">
    <property type="entry name" value="Farnesyl Diphosphate Synthase"/>
    <property type="match status" value="1"/>
</dbReference>
<dbReference type="InterPro" id="IPR008949">
    <property type="entry name" value="Isoprenoid_synthase_dom_sf"/>
</dbReference>
<dbReference type="InterPro" id="IPR034686">
    <property type="entry name" value="Terpene_cyclase-like_2"/>
</dbReference>
<dbReference type="PANTHER" id="PTHR35201">
    <property type="entry name" value="TERPENE SYNTHASE"/>
    <property type="match status" value="1"/>
</dbReference>
<dbReference type="PANTHER" id="PTHR35201:SF2">
    <property type="entry name" value="TERPENE SYNTHASE 1-RELATED"/>
    <property type="match status" value="1"/>
</dbReference>
<dbReference type="Pfam" id="PF19086">
    <property type="entry name" value="Terpene_syn_C_2"/>
    <property type="match status" value="1"/>
</dbReference>
<dbReference type="SUPFAM" id="SSF48576">
    <property type="entry name" value="Terpenoid synthases"/>
    <property type="match status" value="1"/>
</dbReference>